<organismHost>
    <name type="scientific">Lepidoptera</name>
    <name type="common">butterflies and moths</name>
    <dbReference type="NCBI Taxonomy" id="7088"/>
</organismHost>
<proteinExistence type="inferred from homology"/>
<feature type="chain" id="PRO_0000132910" description="p48 protein">
    <location>
        <begin position="1"/>
        <end position="387"/>
    </location>
</feature>
<dbReference type="EMBL" id="L22858">
    <property type="protein sequence ID" value="AAA66733.1"/>
    <property type="molecule type" value="Genomic_DNA"/>
</dbReference>
<dbReference type="EMBL" id="U10885">
    <property type="protein sequence ID" value="AAB08769.1"/>
    <property type="molecule type" value="Genomic_DNA"/>
</dbReference>
<dbReference type="EMBL" id="M94914">
    <property type="protein sequence ID" value="AAA46731.1"/>
    <property type="molecule type" value="Genomic_DNA"/>
</dbReference>
<dbReference type="PIR" id="H72862">
    <property type="entry name" value="H72862"/>
</dbReference>
<dbReference type="SMR" id="Q00732"/>
<dbReference type="KEGG" id="vg:1403936"/>
<dbReference type="OrthoDB" id="4662at10239"/>
<dbReference type="Proteomes" id="UP000008292">
    <property type="component" value="Segment"/>
</dbReference>
<dbReference type="GO" id="GO:0030430">
    <property type="term" value="C:host cell cytoplasm"/>
    <property type="evidence" value="ECO:0007669"/>
    <property type="project" value="UniProtKB-SubCell"/>
</dbReference>
<dbReference type="GO" id="GO:0042025">
    <property type="term" value="C:host cell nucleus"/>
    <property type="evidence" value="ECO:0007669"/>
    <property type="project" value="UniProtKB-SubCell"/>
</dbReference>
<dbReference type="InterPro" id="IPR006962">
    <property type="entry name" value="P48_Baculovir"/>
</dbReference>
<dbReference type="Pfam" id="PF04878">
    <property type="entry name" value="Baculo_p48"/>
    <property type="match status" value="1"/>
</dbReference>
<accession>Q00732</accession>
<protein>
    <recommendedName>
        <fullName>p48 protein</fullName>
    </recommendedName>
    <alternativeName>
        <fullName>p45 protein</fullName>
    </alternativeName>
</protein>
<name>P48_NPVAC</name>
<keyword id="KW-1035">Host cytoplasm</keyword>
<keyword id="KW-1048">Host nucleus</keyword>
<keyword id="KW-0426">Late protein</keyword>
<keyword id="KW-1185">Reference proteome</keyword>
<comment type="function">
    <text evidence="1">Plays an essential role in the production of budded virions (BVs) as well as in the envelopment of occluded derived virions (ODVs).</text>
</comment>
<comment type="subcellular location">
    <subcellularLocation>
        <location evidence="1">Host nucleus</location>
    </subcellularLocation>
    <subcellularLocation>
        <location evidence="1">Host cytoplasm</location>
    </subcellularLocation>
</comment>
<comment type="similarity">
    <text evidence="2">Belongs to the baculoviridae p48 family.</text>
</comment>
<gene>
    <name type="primary">P48</name>
</gene>
<reference key="1">
    <citation type="journal article" date="1994" name="Virology">
        <title>The complete DNA sequence of Autographa californica nuclear polyhedrosis virus.</title>
        <authorList>
            <person name="Ayres M.D."/>
            <person name="Howard S.C."/>
            <person name="Kuzio J."/>
            <person name="Lopez-Ferber M."/>
            <person name="Possee R.D."/>
        </authorList>
    </citation>
    <scope>NUCLEOTIDE SEQUENCE [LARGE SCALE GENOMIC DNA]</scope>
    <source>
        <strain>C6</strain>
    </source>
</reference>
<reference key="2">
    <citation type="submission" date="1994-06" db="EMBL/GenBank/DDBJ databases">
        <authorList>
            <person name="Lu A."/>
            <person name="Craig A."/>
            <person name="Carstens E.B."/>
        </authorList>
    </citation>
    <scope>NUCLEOTIDE SEQUENCE [GENOMIC DNA]</scope>
    <source>
        <strain>HR3</strain>
    </source>
</reference>
<reference key="3">
    <citation type="journal article" date="1992" name="Virology">
        <title>Nucleotide sequence and transcriptional analysis of the p80 gene of Autographa californica nuclear polyhedrosis virus: a homologue of the Orgyia pseudotsugata nuclear polyhedrosis virus capsid-associated gene.</title>
        <authorList>
            <person name="Lu A."/>
            <person name="Carstens E.B."/>
        </authorList>
    </citation>
    <scope>NUCLEOTIDE SEQUENCE [GENOMIC DNA] OF 1-100</scope>
    <source>
        <strain>HR3</strain>
    </source>
</reference>
<reference key="4">
    <citation type="journal article" date="2008" name="Virology">
        <title>A highly conserved baculovirus gene p48 (ac103) is essential for BV production and ODV envelopment.</title>
        <authorList>
            <person name="Yuan M."/>
            <person name="Wu W."/>
            <person name="Liu C."/>
            <person name="Wang Y."/>
            <person name="Hu Z."/>
            <person name="Yang K."/>
            <person name="Pang Y."/>
        </authorList>
    </citation>
    <scope>FUNCTION</scope>
    <scope>SUBCELLULAR LOCATION</scope>
</reference>
<sequence length="387" mass="45313">MCAYRLQYSLRFNIYDRFENVCFEAQLLQDEIDSLCFLFSKYFNQSLIVDSKGLTFFTEFNKCIVSIKSSFENQANNTDNIHNVKNIFSIFLRDEFIKQVPHFRTIMQYLQKYYNPTPAPDVDAIMCQSCKPANKIQCFECKCKYLASSLSTLDAGLQNGWDIFLRPMFGMPLMLYVLLRTDYKNESDIINENNLITQIFVQFFYNLICDKAYSLYTKRDMCVPFVKECKKATVGLRQEDHERVLSILSAQCNGCSTVANGDRLLLPFKNFMIEMGRNTKMKKVNKIASTVLIGFYLRHYLESLPNKAYPVAELELRNVCRFIMSKYSDENINLLIHKLKLIKIDICNVLMTEMIVPETFIRHIITKYQLDNEISLLIELNHDCFNK</sequence>
<organism>
    <name type="scientific">Autographa californica nuclear polyhedrosis virus</name>
    <name type="common">AcMNPV</name>
    <dbReference type="NCBI Taxonomy" id="46015"/>
    <lineage>
        <taxon>Viruses</taxon>
        <taxon>Viruses incertae sedis</taxon>
        <taxon>Naldaviricetes</taxon>
        <taxon>Lefavirales</taxon>
        <taxon>Baculoviridae</taxon>
        <taxon>Alphabaculovirus</taxon>
        <taxon>Alphabaculovirus aucalifornicae</taxon>
    </lineage>
</organism>
<evidence type="ECO:0000269" key="1">
    <source>
    </source>
</evidence>
<evidence type="ECO:0000305" key="2"/>